<protein>
    <recommendedName>
        <fullName>Uncharacterized PPE family protein PPE14</fullName>
    </recommendedName>
</protein>
<feature type="chain" id="PRO_0000428077" description="Uncharacterized PPE family protein PPE14">
    <location>
        <begin position="1"/>
        <end position="423"/>
    </location>
</feature>
<feature type="region of interest" description="Disordered" evidence="1">
    <location>
        <begin position="383"/>
        <end position="423"/>
    </location>
</feature>
<sequence>MDFGLLPPEVNSSRMYSGPGPESMLAAAAAWDGVAAELTSAAVSYGSVVSTLIVEPWMGPAAAAMAAAATPYVGWLAATAALAKETATQARAAAEAFGTAFAMTVPPSLVAANRSRLMSLVAANILGQNSAAIAATQAEYAEMWAQDAAVMYSYEGASAAASALPPFTPPVQGTGPAGPAAAAAATQAAGAGAVADAQATLAQLPPGILSDILSALAANADPLTSGLLGIASTLNPQVGSAQPIVIPTPIGELDVIALYIASIATGSIALAITNTARPWHIGLYGNAGGLGPTQGHPLSSATDEPEPHWGPFGGAAPVSAGVGHAALVGALSVPHSWTTAAPEIQLAVQATPTFSSSAGADPTALNGMPAGLLSGMALASLAARGTTGGGGTRSGTSTDGQEDGRKPPVVVIREQPPPGNPPR</sequence>
<accession>P9WI32</accession>
<accession>L0T7W5</accession>
<accession>Q79FV1</accession>
<accession>Q7D938</accession>
<comment type="similarity">
    <text evidence="2">Belongs to the mycobacterial PPE family.</text>
</comment>
<comment type="sequence caution" evidence="2">
    <conflict type="erroneous initiation">
        <sequence resource="EMBL-CDS" id="AAK45187"/>
    </conflict>
</comment>
<name>PPE14_MYCTO</name>
<gene>
    <name type="primary">PPE14</name>
    <name type="ordered locus">MT0940</name>
</gene>
<keyword id="KW-1185">Reference proteome</keyword>
<reference key="1">
    <citation type="journal article" date="2002" name="J. Bacteriol.">
        <title>Whole-genome comparison of Mycobacterium tuberculosis clinical and laboratory strains.</title>
        <authorList>
            <person name="Fleischmann R.D."/>
            <person name="Alland D."/>
            <person name="Eisen J.A."/>
            <person name="Carpenter L."/>
            <person name="White O."/>
            <person name="Peterson J.D."/>
            <person name="DeBoy R.T."/>
            <person name="Dodson R.J."/>
            <person name="Gwinn M.L."/>
            <person name="Haft D.H."/>
            <person name="Hickey E.K."/>
            <person name="Kolonay J.F."/>
            <person name="Nelson W.C."/>
            <person name="Umayam L.A."/>
            <person name="Ermolaeva M.D."/>
            <person name="Salzberg S.L."/>
            <person name="Delcher A."/>
            <person name="Utterback T.R."/>
            <person name="Weidman J.F."/>
            <person name="Khouri H.M."/>
            <person name="Gill J."/>
            <person name="Mikula A."/>
            <person name="Bishai W."/>
            <person name="Jacobs W.R. Jr."/>
            <person name="Venter J.C."/>
            <person name="Fraser C.M."/>
        </authorList>
    </citation>
    <scope>NUCLEOTIDE SEQUENCE [LARGE SCALE GENOMIC DNA]</scope>
    <source>
        <strain>CDC 1551 / Oshkosh</strain>
    </source>
</reference>
<evidence type="ECO:0000256" key="1">
    <source>
        <dbReference type="SAM" id="MobiDB-lite"/>
    </source>
</evidence>
<evidence type="ECO:0000305" key="2"/>
<proteinExistence type="inferred from homology"/>
<organism>
    <name type="scientific">Mycobacterium tuberculosis (strain CDC 1551 / Oshkosh)</name>
    <dbReference type="NCBI Taxonomy" id="83331"/>
    <lineage>
        <taxon>Bacteria</taxon>
        <taxon>Bacillati</taxon>
        <taxon>Actinomycetota</taxon>
        <taxon>Actinomycetes</taxon>
        <taxon>Mycobacteriales</taxon>
        <taxon>Mycobacteriaceae</taxon>
        <taxon>Mycobacterium</taxon>
        <taxon>Mycobacterium tuberculosis complex</taxon>
    </lineage>
</organism>
<dbReference type="EMBL" id="AE000516">
    <property type="protein sequence ID" value="AAK45187.1"/>
    <property type="status" value="ALT_INIT"/>
    <property type="molecule type" value="Genomic_DNA"/>
</dbReference>
<dbReference type="PIR" id="C70582">
    <property type="entry name" value="C70582"/>
</dbReference>
<dbReference type="RefSeq" id="WP_003404747.1">
    <property type="nucleotide sequence ID" value="NZ_KK341227.1"/>
</dbReference>
<dbReference type="SMR" id="P9WI32"/>
<dbReference type="KEGG" id="mtc:MT0940"/>
<dbReference type="PATRIC" id="fig|83331.31.peg.1009"/>
<dbReference type="HOGENOM" id="CLU_000243_0_1_11"/>
<dbReference type="Proteomes" id="UP000001020">
    <property type="component" value="Chromosome"/>
</dbReference>
<dbReference type="GO" id="GO:0052572">
    <property type="term" value="P:response to host immune response"/>
    <property type="evidence" value="ECO:0007669"/>
    <property type="project" value="TreeGrafter"/>
</dbReference>
<dbReference type="FunFam" id="1.20.1260.20:FF:000001">
    <property type="entry name" value="PPE family protein PPE41"/>
    <property type="match status" value="1"/>
</dbReference>
<dbReference type="Gene3D" id="1.20.1260.20">
    <property type="entry name" value="PPE superfamily"/>
    <property type="match status" value="1"/>
</dbReference>
<dbReference type="InterPro" id="IPR022171">
    <property type="entry name" value="PPE_C"/>
</dbReference>
<dbReference type="InterPro" id="IPR000030">
    <property type="entry name" value="PPE_dom"/>
</dbReference>
<dbReference type="InterPro" id="IPR038332">
    <property type="entry name" value="PPE_sf"/>
</dbReference>
<dbReference type="PANTHER" id="PTHR46766">
    <property type="entry name" value="GLUTAMINE-RICH PROTEIN 2"/>
    <property type="match status" value="1"/>
</dbReference>
<dbReference type="PANTHER" id="PTHR46766:SF1">
    <property type="entry name" value="GLUTAMINE-RICH PROTEIN 2"/>
    <property type="match status" value="1"/>
</dbReference>
<dbReference type="Pfam" id="PF00823">
    <property type="entry name" value="PPE"/>
    <property type="match status" value="1"/>
</dbReference>
<dbReference type="Pfam" id="PF12484">
    <property type="entry name" value="PPE-SVP"/>
    <property type="match status" value="1"/>
</dbReference>
<dbReference type="SUPFAM" id="SSF140459">
    <property type="entry name" value="PE/PPE dimer-like"/>
    <property type="match status" value="1"/>
</dbReference>